<protein>
    <recommendedName>
        <fullName evidence="1">Homoserine kinase</fullName>
        <shortName evidence="1">HK</shortName>
        <shortName evidence="1">HSK</shortName>
        <ecNumber evidence="1">2.7.1.39</ecNumber>
    </recommendedName>
</protein>
<evidence type="ECO:0000255" key="1">
    <source>
        <dbReference type="HAMAP-Rule" id="MF_00384"/>
    </source>
</evidence>
<feature type="chain" id="PRO_0000156548" description="Homoserine kinase">
    <location>
        <begin position="1"/>
        <end position="297"/>
    </location>
</feature>
<feature type="binding site" evidence="1">
    <location>
        <begin position="82"/>
        <end position="92"/>
    </location>
    <ligand>
        <name>ATP</name>
        <dbReference type="ChEBI" id="CHEBI:30616"/>
    </ligand>
</feature>
<comment type="function">
    <text evidence="1">Catalyzes the ATP-dependent phosphorylation of L-homoserine to L-homoserine phosphate.</text>
</comment>
<comment type="catalytic activity">
    <reaction evidence="1">
        <text>L-homoserine + ATP = O-phospho-L-homoserine + ADP + H(+)</text>
        <dbReference type="Rhea" id="RHEA:13985"/>
        <dbReference type="ChEBI" id="CHEBI:15378"/>
        <dbReference type="ChEBI" id="CHEBI:30616"/>
        <dbReference type="ChEBI" id="CHEBI:57476"/>
        <dbReference type="ChEBI" id="CHEBI:57590"/>
        <dbReference type="ChEBI" id="CHEBI:456216"/>
        <dbReference type="EC" id="2.7.1.39"/>
    </reaction>
</comment>
<comment type="pathway">
    <text evidence="1">Amino-acid biosynthesis; L-threonine biosynthesis; L-threonine from L-aspartate: step 4/5.</text>
</comment>
<comment type="subcellular location">
    <subcellularLocation>
        <location evidence="1">Cytoplasm</location>
    </subcellularLocation>
</comment>
<comment type="similarity">
    <text evidence="1">Belongs to the GHMP kinase family. Homoserine kinase subfamily.</text>
</comment>
<proteinExistence type="inferred from homology"/>
<reference key="1">
    <citation type="journal article" date="2004" name="Nucleic Acids Res.">
        <title>The genome sequence of Bacillus cereus ATCC 10987 reveals metabolic adaptations and a large plasmid related to Bacillus anthracis pXO1.</title>
        <authorList>
            <person name="Rasko D.A."/>
            <person name="Ravel J."/>
            <person name="Oekstad O.A."/>
            <person name="Helgason E."/>
            <person name="Cer R.Z."/>
            <person name="Jiang L."/>
            <person name="Shores K.A."/>
            <person name="Fouts D.E."/>
            <person name="Tourasse N.J."/>
            <person name="Angiuoli S.V."/>
            <person name="Kolonay J.F."/>
            <person name="Nelson W.C."/>
            <person name="Kolstoe A.-B."/>
            <person name="Fraser C.M."/>
            <person name="Read T.D."/>
        </authorList>
    </citation>
    <scope>NUCLEOTIDE SEQUENCE [LARGE SCALE GENOMIC DNA]</scope>
    <source>
        <strain>ATCC 10987 / NRS 248</strain>
    </source>
</reference>
<sequence length="297" mass="32155">MIPLSIRVPASTANVGPGFDSVGIALSLYLHVVVKEKSNKWQVIHSFDESIPTDDKNLIVSTACKVSPSLSPYIIEVTSNIPLTRGLGSSASAIVAGIELANQLGNLNLTTDQKVQIATNFEGHPDNVAASILGGTVIGALDGKNVSVVRIESKELGVISLIPNEELNTDESRSVLPDVFPFHEAVKASAISNVLVAALCQKKWEVVGEMMERDHFHEPYRLELVPLLPSIRKCAKEFGAYGTALSGAGPSIFILTPYEKRQEIAEQLARVFTSMKVCELEIDHTGITVNKEERIEL</sequence>
<name>KHSE_BACC1</name>
<dbReference type="EC" id="2.7.1.39" evidence="1"/>
<dbReference type="EMBL" id="AE017194">
    <property type="protein sequence ID" value="AAS40976.1"/>
    <property type="molecule type" value="Genomic_DNA"/>
</dbReference>
<dbReference type="SMR" id="Q739T5"/>
<dbReference type="KEGG" id="bca:BCE_2053"/>
<dbReference type="HOGENOM" id="CLU_041243_0_0_9"/>
<dbReference type="UniPathway" id="UPA00050">
    <property type="reaction ID" value="UER00064"/>
</dbReference>
<dbReference type="Proteomes" id="UP000002527">
    <property type="component" value="Chromosome"/>
</dbReference>
<dbReference type="GO" id="GO:0005737">
    <property type="term" value="C:cytoplasm"/>
    <property type="evidence" value="ECO:0007669"/>
    <property type="project" value="UniProtKB-SubCell"/>
</dbReference>
<dbReference type="GO" id="GO:0005524">
    <property type="term" value="F:ATP binding"/>
    <property type="evidence" value="ECO:0007669"/>
    <property type="project" value="UniProtKB-UniRule"/>
</dbReference>
<dbReference type="GO" id="GO:0004413">
    <property type="term" value="F:homoserine kinase activity"/>
    <property type="evidence" value="ECO:0007669"/>
    <property type="project" value="UniProtKB-UniRule"/>
</dbReference>
<dbReference type="GO" id="GO:0009088">
    <property type="term" value="P:threonine biosynthetic process"/>
    <property type="evidence" value="ECO:0007669"/>
    <property type="project" value="UniProtKB-UniRule"/>
</dbReference>
<dbReference type="Gene3D" id="3.30.230.10">
    <property type="match status" value="1"/>
</dbReference>
<dbReference type="Gene3D" id="3.30.70.890">
    <property type="entry name" value="GHMP kinase, C-terminal domain"/>
    <property type="match status" value="1"/>
</dbReference>
<dbReference type="HAMAP" id="MF_00384">
    <property type="entry name" value="Homoser_kinase"/>
    <property type="match status" value="1"/>
</dbReference>
<dbReference type="InterPro" id="IPR013750">
    <property type="entry name" value="GHMP_kinase_C_dom"/>
</dbReference>
<dbReference type="InterPro" id="IPR036554">
    <property type="entry name" value="GHMP_kinase_C_sf"/>
</dbReference>
<dbReference type="InterPro" id="IPR006204">
    <property type="entry name" value="GHMP_kinase_N_dom"/>
</dbReference>
<dbReference type="InterPro" id="IPR006203">
    <property type="entry name" value="GHMP_knse_ATP-bd_CS"/>
</dbReference>
<dbReference type="InterPro" id="IPR000870">
    <property type="entry name" value="Homoserine_kinase"/>
</dbReference>
<dbReference type="InterPro" id="IPR020568">
    <property type="entry name" value="Ribosomal_Su5_D2-typ_SF"/>
</dbReference>
<dbReference type="InterPro" id="IPR014721">
    <property type="entry name" value="Ribsml_uS5_D2-typ_fold_subgr"/>
</dbReference>
<dbReference type="NCBIfam" id="TIGR00191">
    <property type="entry name" value="thrB"/>
    <property type="match status" value="1"/>
</dbReference>
<dbReference type="PANTHER" id="PTHR20861:SF1">
    <property type="entry name" value="HOMOSERINE KINASE"/>
    <property type="match status" value="1"/>
</dbReference>
<dbReference type="PANTHER" id="PTHR20861">
    <property type="entry name" value="HOMOSERINE/4-DIPHOSPHOCYTIDYL-2-C-METHYL-D-ERYTHRITOL KINASE"/>
    <property type="match status" value="1"/>
</dbReference>
<dbReference type="Pfam" id="PF08544">
    <property type="entry name" value="GHMP_kinases_C"/>
    <property type="match status" value="1"/>
</dbReference>
<dbReference type="Pfam" id="PF00288">
    <property type="entry name" value="GHMP_kinases_N"/>
    <property type="match status" value="1"/>
</dbReference>
<dbReference type="PIRSF" id="PIRSF000676">
    <property type="entry name" value="Homoser_kin"/>
    <property type="match status" value="1"/>
</dbReference>
<dbReference type="PRINTS" id="PR00958">
    <property type="entry name" value="HOMSERKINASE"/>
</dbReference>
<dbReference type="SUPFAM" id="SSF55060">
    <property type="entry name" value="GHMP Kinase, C-terminal domain"/>
    <property type="match status" value="1"/>
</dbReference>
<dbReference type="SUPFAM" id="SSF54211">
    <property type="entry name" value="Ribosomal protein S5 domain 2-like"/>
    <property type="match status" value="1"/>
</dbReference>
<dbReference type="PROSITE" id="PS00627">
    <property type="entry name" value="GHMP_KINASES_ATP"/>
    <property type="match status" value="1"/>
</dbReference>
<accession>Q739T5</accession>
<organism>
    <name type="scientific">Bacillus cereus (strain ATCC 10987 / NRS 248)</name>
    <dbReference type="NCBI Taxonomy" id="222523"/>
    <lineage>
        <taxon>Bacteria</taxon>
        <taxon>Bacillati</taxon>
        <taxon>Bacillota</taxon>
        <taxon>Bacilli</taxon>
        <taxon>Bacillales</taxon>
        <taxon>Bacillaceae</taxon>
        <taxon>Bacillus</taxon>
        <taxon>Bacillus cereus group</taxon>
    </lineage>
</organism>
<keyword id="KW-0028">Amino-acid biosynthesis</keyword>
<keyword id="KW-0067">ATP-binding</keyword>
<keyword id="KW-0963">Cytoplasm</keyword>
<keyword id="KW-0418">Kinase</keyword>
<keyword id="KW-0547">Nucleotide-binding</keyword>
<keyword id="KW-0791">Threonine biosynthesis</keyword>
<keyword id="KW-0808">Transferase</keyword>
<gene>
    <name evidence="1" type="primary">thrB</name>
    <name type="ordered locus">BCE_2053</name>
</gene>